<proteinExistence type="inferred from homology"/>
<protein>
    <recommendedName>
        <fullName evidence="1">L-threonine 3-dehydrogenase</fullName>
        <shortName evidence="1">TDH</shortName>
        <ecNumber evidence="1">1.1.1.103</ecNumber>
    </recommendedName>
</protein>
<dbReference type="EC" id="1.1.1.103" evidence="1"/>
<dbReference type="EMBL" id="AE005174">
    <property type="protein sequence ID" value="AAG58763.1"/>
    <property type="molecule type" value="Genomic_DNA"/>
</dbReference>
<dbReference type="EMBL" id="BA000007">
    <property type="protein sequence ID" value="BAB37917.1"/>
    <property type="molecule type" value="Genomic_DNA"/>
</dbReference>
<dbReference type="PIR" id="F91190">
    <property type="entry name" value="F91190"/>
</dbReference>
<dbReference type="PIR" id="G86037">
    <property type="entry name" value="G86037"/>
</dbReference>
<dbReference type="RefSeq" id="NP_312521.1">
    <property type="nucleotide sequence ID" value="NC_002695.1"/>
</dbReference>
<dbReference type="RefSeq" id="WP_000646013.1">
    <property type="nucleotide sequence ID" value="NZ_VOAI01000021.1"/>
</dbReference>
<dbReference type="SMR" id="Q8XEJ1"/>
<dbReference type="STRING" id="155864.Z5043"/>
<dbReference type="GeneID" id="915560"/>
<dbReference type="KEGG" id="ece:Z5043"/>
<dbReference type="KEGG" id="ecs:ECs_4494"/>
<dbReference type="PATRIC" id="fig|386585.9.peg.4710"/>
<dbReference type="eggNOG" id="COG1063">
    <property type="taxonomic scope" value="Bacteria"/>
</dbReference>
<dbReference type="HOGENOM" id="CLU_026673_11_0_6"/>
<dbReference type="OMA" id="FETWYAM"/>
<dbReference type="UniPathway" id="UPA00046">
    <property type="reaction ID" value="UER00505"/>
</dbReference>
<dbReference type="Proteomes" id="UP000000558">
    <property type="component" value="Chromosome"/>
</dbReference>
<dbReference type="Proteomes" id="UP000002519">
    <property type="component" value="Chromosome"/>
</dbReference>
<dbReference type="GO" id="GO:0005737">
    <property type="term" value="C:cytoplasm"/>
    <property type="evidence" value="ECO:0007669"/>
    <property type="project" value="UniProtKB-SubCell"/>
</dbReference>
<dbReference type="GO" id="GO:0008743">
    <property type="term" value="F:L-threonine 3-dehydrogenase activity"/>
    <property type="evidence" value="ECO:0007669"/>
    <property type="project" value="UniProtKB-UniRule"/>
</dbReference>
<dbReference type="GO" id="GO:0008270">
    <property type="term" value="F:zinc ion binding"/>
    <property type="evidence" value="ECO:0007669"/>
    <property type="project" value="UniProtKB-UniRule"/>
</dbReference>
<dbReference type="GO" id="GO:0019518">
    <property type="term" value="P:L-threonine catabolic process to glycine"/>
    <property type="evidence" value="ECO:0007669"/>
    <property type="project" value="UniProtKB-UniPathway"/>
</dbReference>
<dbReference type="FunFam" id="3.40.50.720:FF:000059">
    <property type="entry name" value="L-threonine 3-dehydrogenase"/>
    <property type="match status" value="1"/>
</dbReference>
<dbReference type="Gene3D" id="3.90.180.10">
    <property type="entry name" value="Medium-chain alcohol dehydrogenases, catalytic domain"/>
    <property type="match status" value="1"/>
</dbReference>
<dbReference type="Gene3D" id="3.40.50.720">
    <property type="entry name" value="NAD(P)-binding Rossmann-like Domain"/>
    <property type="match status" value="1"/>
</dbReference>
<dbReference type="HAMAP" id="MF_00627">
    <property type="entry name" value="Thr_dehydrog"/>
    <property type="match status" value="1"/>
</dbReference>
<dbReference type="InterPro" id="IPR013149">
    <property type="entry name" value="ADH-like_C"/>
</dbReference>
<dbReference type="InterPro" id="IPR013154">
    <property type="entry name" value="ADH-like_N"/>
</dbReference>
<dbReference type="InterPro" id="IPR002328">
    <property type="entry name" value="ADH_Zn_CS"/>
</dbReference>
<dbReference type="InterPro" id="IPR011032">
    <property type="entry name" value="GroES-like_sf"/>
</dbReference>
<dbReference type="InterPro" id="IPR004627">
    <property type="entry name" value="L-Threonine_3-DHase"/>
</dbReference>
<dbReference type="InterPro" id="IPR036291">
    <property type="entry name" value="NAD(P)-bd_dom_sf"/>
</dbReference>
<dbReference type="InterPro" id="IPR020843">
    <property type="entry name" value="PKS_ER"/>
</dbReference>
<dbReference type="InterPro" id="IPR050129">
    <property type="entry name" value="Zn_alcohol_dh"/>
</dbReference>
<dbReference type="NCBIfam" id="NF003808">
    <property type="entry name" value="PRK05396.1"/>
    <property type="match status" value="1"/>
</dbReference>
<dbReference type="NCBIfam" id="TIGR00692">
    <property type="entry name" value="tdh"/>
    <property type="match status" value="1"/>
</dbReference>
<dbReference type="PANTHER" id="PTHR43401">
    <property type="entry name" value="L-THREONINE 3-DEHYDROGENASE"/>
    <property type="match status" value="1"/>
</dbReference>
<dbReference type="PANTHER" id="PTHR43401:SF2">
    <property type="entry name" value="L-THREONINE 3-DEHYDROGENASE"/>
    <property type="match status" value="1"/>
</dbReference>
<dbReference type="Pfam" id="PF08240">
    <property type="entry name" value="ADH_N"/>
    <property type="match status" value="1"/>
</dbReference>
<dbReference type="Pfam" id="PF00107">
    <property type="entry name" value="ADH_zinc_N"/>
    <property type="match status" value="1"/>
</dbReference>
<dbReference type="SMART" id="SM00829">
    <property type="entry name" value="PKS_ER"/>
    <property type="match status" value="1"/>
</dbReference>
<dbReference type="SUPFAM" id="SSF50129">
    <property type="entry name" value="GroES-like"/>
    <property type="match status" value="1"/>
</dbReference>
<dbReference type="SUPFAM" id="SSF51735">
    <property type="entry name" value="NAD(P)-binding Rossmann-fold domains"/>
    <property type="match status" value="1"/>
</dbReference>
<dbReference type="PROSITE" id="PS00059">
    <property type="entry name" value="ADH_ZINC"/>
    <property type="match status" value="1"/>
</dbReference>
<gene>
    <name evidence="1" type="primary">tdh</name>
    <name type="ordered locus">Z5043</name>
    <name type="ordered locus">ECs4494</name>
</gene>
<name>TDH_ECO57</name>
<keyword id="KW-0963">Cytoplasm</keyword>
<keyword id="KW-0479">Metal-binding</keyword>
<keyword id="KW-0520">NAD</keyword>
<keyword id="KW-0560">Oxidoreductase</keyword>
<keyword id="KW-1185">Reference proteome</keyword>
<keyword id="KW-0862">Zinc</keyword>
<feature type="chain" id="PRO_0000160839" description="L-threonine 3-dehydrogenase">
    <location>
        <begin position="1"/>
        <end position="341"/>
    </location>
</feature>
<feature type="active site" description="Charge relay system" evidence="1">
    <location>
        <position position="40"/>
    </location>
</feature>
<feature type="active site" description="Charge relay system" evidence="1">
    <location>
        <position position="43"/>
    </location>
</feature>
<feature type="binding site" evidence="1">
    <location>
        <position position="38"/>
    </location>
    <ligand>
        <name>Zn(2+)</name>
        <dbReference type="ChEBI" id="CHEBI:29105"/>
        <label>1</label>
        <note>catalytic</note>
    </ligand>
</feature>
<feature type="binding site" evidence="1">
    <location>
        <position position="63"/>
    </location>
    <ligand>
        <name>Zn(2+)</name>
        <dbReference type="ChEBI" id="CHEBI:29105"/>
        <label>1</label>
        <note>catalytic</note>
    </ligand>
</feature>
<feature type="binding site" evidence="1">
    <location>
        <position position="64"/>
    </location>
    <ligand>
        <name>Zn(2+)</name>
        <dbReference type="ChEBI" id="CHEBI:29105"/>
        <label>1</label>
        <note>catalytic</note>
    </ligand>
</feature>
<feature type="binding site" evidence="1">
    <location>
        <position position="93"/>
    </location>
    <ligand>
        <name>Zn(2+)</name>
        <dbReference type="ChEBI" id="CHEBI:29105"/>
        <label>2</label>
    </ligand>
</feature>
<feature type="binding site" evidence="1">
    <location>
        <position position="96"/>
    </location>
    <ligand>
        <name>Zn(2+)</name>
        <dbReference type="ChEBI" id="CHEBI:29105"/>
        <label>2</label>
    </ligand>
</feature>
<feature type="binding site" evidence="1">
    <location>
        <position position="99"/>
    </location>
    <ligand>
        <name>Zn(2+)</name>
        <dbReference type="ChEBI" id="CHEBI:29105"/>
        <label>2</label>
    </ligand>
</feature>
<feature type="binding site" evidence="1">
    <location>
        <position position="107"/>
    </location>
    <ligand>
        <name>Zn(2+)</name>
        <dbReference type="ChEBI" id="CHEBI:29105"/>
        <label>2</label>
    </ligand>
</feature>
<feature type="binding site" evidence="1">
    <location>
        <position position="175"/>
    </location>
    <ligand>
        <name>NAD(+)</name>
        <dbReference type="ChEBI" id="CHEBI:57540"/>
    </ligand>
</feature>
<feature type="binding site" evidence="1">
    <location>
        <position position="195"/>
    </location>
    <ligand>
        <name>NAD(+)</name>
        <dbReference type="ChEBI" id="CHEBI:57540"/>
    </ligand>
</feature>
<feature type="binding site" evidence="1">
    <location>
        <position position="200"/>
    </location>
    <ligand>
        <name>NAD(+)</name>
        <dbReference type="ChEBI" id="CHEBI:57540"/>
    </ligand>
</feature>
<feature type="binding site" evidence="1">
    <location>
        <begin position="262"/>
        <end position="264"/>
    </location>
    <ligand>
        <name>NAD(+)</name>
        <dbReference type="ChEBI" id="CHEBI:57540"/>
    </ligand>
</feature>
<feature type="binding site" evidence="1">
    <location>
        <begin position="286"/>
        <end position="287"/>
    </location>
    <ligand>
        <name>NAD(+)</name>
        <dbReference type="ChEBI" id="CHEBI:57540"/>
    </ligand>
</feature>
<feature type="site" description="Important for catalytic activity for the proton relay mechanism but does not participate directly in the coordination of zinc atom" evidence="1">
    <location>
        <position position="148"/>
    </location>
</feature>
<feature type="sequence conflict" description="In Ref. 2; BAB37917." evidence="2" ref="2">
    <original>T</original>
    <variation>N</variation>
    <location>
        <position position="54"/>
    </location>
</feature>
<reference key="1">
    <citation type="journal article" date="2001" name="Nature">
        <title>Genome sequence of enterohaemorrhagic Escherichia coli O157:H7.</title>
        <authorList>
            <person name="Perna N.T."/>
            <person name="Plunkett G. III"/>
            <person name="Burland V."/>
            <person name="Mau B."/>
            <person name="Glasner J.D."/>
            <person name="Rose D.J."/>
            <person name="Mayhew G.F."/>
            <person name="Evans P.S."/>
            <person name="Gregor J."/>
            <person name="Kirkpatrick H.A."/>
            <person name="Posfai G."/>
            <person name="Hackett J."/>
            <person name="Klink S."/>
            <person name="Boutin A."/>
            <person name="Shao Y."/>
            <person name="Miller L."/>
            <person name="Grotbeck E.J."/>
            <person name="Davis N.W."/>
            <person name="Lim A."/>
            <person name="Dimalanta E.T."/>
            <person name="Potamousis K."/>
            <person name="Apodaca J."/>
            <person name="Anantharaman T.S."/>
            <person name="Lin J."/>
            <person name="Yen G."/>
            <person name="Schwartz D.C."/>
            <person name="Welch R.A."/>
            <person name="Blattner F.R."/>
        </authorList>
    </citation>
    <scope>NUCLEOTIDE SEQUENCE [LARGE SCALE GENOMIC DNA]</scope>
    <source>
        <strain>O157:H7 / EDL933 / ATCC 700927 / EHEC</strain>
    </source>
</reference>
<reference key="2">
    <citation type="journal article" date="2001" name="DNA Res.">
        <title>Complete genome sequence of enterohemorrhagic Escherichia coli O157:H7 and genomic comparison with a laboratory strain K-12.</title>
        <authorList>
            <person name="Hayashi T."/>
            <person name="Makino K."/>
            <person name="Ohnishi M."/>
            <person name="Kurokawa K."/>
            <person name="Ishii K."/>
            <person name="Yokoyama K."/>
            <person name="Han C.-G."/>
            <person name="Ohtsubo E."/>
            <person name="Nakayama K."/>
            <person name="Murata T."/>
            <person name="Tanaka M."/>
            <person name="Tobe T."/>
            <person name="Iida T."/>
            <person name="Takami H."/>
            <person name="Honda T."/>
            <person name="Sasakawa C."/>
            <person name="Ogasawara N."/>
            <person name="Yasunaga T."/>
            <person name="Kuhara S."/>
            <person name="Shiba T."/>
            <person name="Hattori M."/>
            <person name="Shinagawa H."/>
        </authorList>
    </citation>
    <scope>NUCLEOTIDE SEQUENCE [LARGE SCALE GENOMIC DNA]</scope>
    <source>
        <strain>O157:H7 / Sakai / RIMD 0509952 / EHEC</strain>
    </source>
</reference>
<evidence type="ECO:0000255" key="1">
    <source>
        <dbReference type="HAMAP-Rule" id="MF_00627"/>
    </source>
</evidence>
<evidence type="ECO:0000305" key="2"/>
<accession>Q8XEJ1</accession>
<sequence>MKALSKLKAEEGIWMTDVPVPELGHNDLLIKIRKTAICGTDVHIYNWDEWSQKTIPVPMVVGHEYVGEVVGIGQEVKGFKIGDRVSGEGHITCGHCRNCRGGRTHLCRNTIGVGVNRPGCFAEYLVIPAFNAFKIPDNISDDLASIFDPFGNAVHTALSFDLVGEDVLVSGAGPIGIMAAAVAKHVGARNVVITDVNEYRLELARKMGITRAVNVAKENLNDVMAELGMTEGFDVGLEMSGAPPAFRTMLDTMNHGGRIAMLGIPPSDMSIDWTKVIFKGLFIKGIYGREMFETWYKMAALIQSGLDLSPIITHRFSIDDFQKGFDAMCSGQSGKVILSWD</sequence>
<comment type="function">
    <text evidence="1">Catalyzes the NAD(+)-dependent oxidation of L-threonine to 2-amino-3-ketobutyrate.</text>
</comment>
<comment type="catalytic activity">
    <reaction evidence="1">
        <text>L-threonine + NAD(+) = (2S)-2-amino-3-oxobutanoate + NADH + H(+)</text>
        <dbReference type="Rhea" id="RHEA:13161"/>
        <dbReference type="ChEBI" id="CHEBI:15378"/>
        <dbReference type="ChEBI" id="CHEBI:57540"/>
        <dbReference type="ChEBI" id="CHEBI:57926"/>
        <dbReference type="ChEBI" id="CHEBI:57945"/>
        <dbReference type="ChEBI" id="CHEBI:78948"/>
        <dbReference type="EC" id="1.1.1.103"/>
    </reaction>
</comment>
<comment type="cofactor">
    <cofactor evidence="1">
        <name>Zn(2+)</name>
        <dbReference type="ChEBI" id="CHEBI:29105"/>
    </cofactor>
    <text evidence="1">Binds 2 Zn(2+) ions per subunit.</text>
</comment>
<comment type="pathway">
    <text evidence="1">Amino-acid degradation; L-threonine degradation via oxydo-reductase pathway; glycine from L-threonine: step 1/2.</text>
</comment>
<comment type="subunit">
    <text evidence="1">Homotetramer.</text>
</comment>
<comment type="subcellular location">
    <subcellularLocation>
        <location evidence="1">Cytoplasm</location>
    </subcellularLocation>
</comment>
<comment type="similarity">
    <text evidence="1">Belongs to the zinc-containing alcohol dehydrogenase family.</text>
</comment>
<organism>
    <name type="scientific">Escherichia coli O157:H7</name>
    <dbReference type="NCBI Taxonomy" id="83334"/>
    <lineage>
        <taxon>Bacteria</taxon>
        <taxon>Pseudomonadati</taxon>
        <taxon>Pseudomonadota</taxon>
        <taxon>Gammaproteobacteria</taxon>
        <taxon>Enterobacterales</taxon>
        <taxon>Enterobacteriaceae</taxon>
        <taxon>Escherichia</taxon>
    </lineage>
</organism>